<proteinExistence type="evidence at protein level"/>
<reference key="1">
    <citation type="submission" date="2001-12" db="EMBL/GenBank/DDBJ databases">
        <title>A novel Rho family GTPase, Rnd2, is linked to endosomal trafficking via direct binding to Vps4-A.</title>
        <authorList>
            <person name="Tanaka H."/>
            <person name="Fujita H."/>
            <person name="Katoh H."/>
            <person name="Mori K."/>
            <person name="Negishi M."/>
        </authorList>
    </citation>
    <scope>NUCLEOTIDE SEQUENCE [MRNA]</scope>
</reference>
<reference key="2">
    <citation type="journal article" date="2012" name="Nat. Commun.">
        <title>Quantitative maps of protein phosphorylation sites across 14 different rat organs and tissues.</title>
        <authorList>
            <person name="Lundby A."/>
            <person name="Secher A."/>
            <person name="Lage K."/>
            <person name="Nordsborg N.B."/>
            <person name="Dmytriyev A."/>
            <person name="Lundby C."/>
            <person name="Olsen J.V."/>
        </authorList>
    </citation>
    <scope>PHOSPHORYLATION [LARGE SCALE ANALYSIS] AT SER-95 AND SER-97</scope>
    <scope>IDENTIFICATION BY MASS SPECTROMETRY [LARGE SCALE ANALYSIS]</scope>
</reference>
<name>VPS4A_RAT</name>
<gene>
    <name evidence="8" type="primary">Vps4a</name>
    <name type="synonym">vps4-A</name>
</gene>
<organism>
    <name type="scientific">Rattus norvegicus</name>
    <name type="common">Rat</name>
    <dbReference type="NCBI Taxonomy" id="10116"/>
    <lineage>
        <taxon>Eukaryota</taxon>
        <taxon>Metazoa</taxon>
        <taxon>Chordata</taxon>
        <taxon>Craniata</taxon>
        <taxon>Vertebrata</taxon>
        <taxon>Euteleostomi</taxon>
        <taxon>Mammalia</taxon>
        <taxon>Eutheria</taxon>
        <taxon>Euarchontoglires</taxon>
        <taxon>Glires</taxon>
        <taxon>Rodentia</taxon>
        <taxon>Myomorpha</taxon>
        <taxon>Muroidea</taxon>
        <taxon>Muridae</taxon>
        <taxon>Murinae</taxon>
        <taxon>Rattus</taxon>
    </lineage>
</organism>
<comment type="function">
    <text evidence="4">Involved in late steps of the endosomal multivesicular bodies (MVB) pathway. Recognizes membrane-associated ESCRT-III assemblies and catalyzes their disassembly, possibly in combination with membrane fission. Redistributes the ESCRT-III components to the cytoplasm for further rounds of MVB sorting. MVBs contain intraluminal vesicles (ILVs) that are generated by invagination and scission from the limiting membrane of the endosome and mostly are delivered to lysosomes enabling degradation of membrane proteins, such as stimulated growth factor receptors, lysosomal enzymes and lipids. It is required for proper accomplishment of various processes including the regulation of endosome size, primary cilium organization, mitotic spindle organization and chromosome segregation, and nuclear envelope sealing and spindle disassembly during anaphase (By similarity). In conjunction with the ESCRT machinery also appears to function in topologically equivalent membrane fission events, such as the terminal stages of cytokinesis. Involved in cytokinesis: retained at the midbody by ZFYVE19/ANCHR and CHMP4C until abscission checkpoint signaling is terminated at late cytokinesis. It is then released following dephosphorylation of CHMP4C, leading to abscission. VPS4A/B are required for the exosomal release of SDCBP, CD63 and syndecan (By similarity). Critical for normal erythroblast cytokinesis and correct erythropoiesis (By similarity).</text>
</comment>
<comment type="catalytic activity">
    <reaction evidence="2">
        <text>ATP + H2O = ADP + phosphate + H(+)</text>
        <dbReference type="Rhea" id="RHEA:13065"/>
        <dbReference type="ChEBI" id="CHEBI:15377"/>
        <dbReference type="ChEBI" id="CHEBI:15378"/>
        <dbReference type="ChEBI" id="CHEBI:30616"/>
        <dbReference type="ChEBI" id="CHEBI:43474"/>
        <dbReference type="ChEBI" id="CHEBI:456216"/>
        <dbReference type="EC" id="3.6.4.6"/>
    </reaction>
</comment>
<comment type="subunit">
    <text evidence="1 4">Proposed to be monomeric or homodimeric in nucleotide-free form and to oligomerize upon binding to ATP to form two stacked hexameric or heptameric rings with a central pore through which ESCRT-III substrates are translocated in an ATP-dependent manner (By similarity). Interacts with CHMP1A, CHMP1B, CHMP2A, CHMP2B, CHMP3, CHMP4A, CHMP4B, CHMP4C and CHMP6. Interacts with VPS4B; the interaction suggests a heteromeric assembly with VPS4B. Interacts with SPAST. Interacts with IST1. Interacts with ZFYVE19/ANCHR; leading to retain it at midbody (By similarity).</text>
</comment>
<comment type="subcellular location">
    <subcellularLocation>
        <location evidence="3">Late endosome membrane</location>
        <topology evidence="3">Peripheral membrane protein</topology>
    </subcellularLocation>
    <subcellularLocation>
        <location evidence="4">Midbody</location>
    </subcellularLocation>
    <subcellularLocation>
        <location evidence="4">Cytoplasm</location>
        <location evidence="4">Cytoskeleton</location>
        <location evidence="4">Spindle</location>
    </subcellularLocation>
    <text evidence="4">Membrane-associated in the prevacuolar endosomal compartment. Localizes to the midbody of dividing cells, interaction with ZFYVE19/ANCHR mediates retention at midbody. Localized in two distinct rings on either side of the Flemming body.</text>
</comment>
<comment type="domain">
    <text evidence="2">The MIT domain serves as an adapter for ESCRT-III proteins. It forms an asymmetric three-helix bundle that binds amphipathic MIM (MIT interacting motif) helices along the groove between MIT helices 2 and 3 present in a subset of ESCRT-III proteins thus establishing the canonical MIM-MIT interaction. In an extended conformation along the groove between helices 1 and 3, also binds to a type-2 MIT interacting motif (MIM2) (By similarity).</text>
</comment>
<comment type="similarity">
    <text evidence="7">Belongs to the AAA ATPase family.</text>
</comment>
<protein>
    <recommendedName>
        <fullName evidence="7">Vacuolar protein sorting-associated protein 4A</fullName>
        <ecNumber evidence="2">3.6.4.6</ecNumber>
    </recommendedName>
</protein>
<feature type="chain" id="PRO_0000331377" description="Vacuolar protein sorting-associated protein 4A">
    <location>
        <begin position="1"/>
        <end position="437"/>
    </location>
</feature>
<feature type="domain" description="MIT">
    <location>
        <begin position="2"/>
        <end position="80"/>
    </location>
</feature>
<feature type="region of interest" description="Disordered" evidence="6">
    <location>
        <begin position="75"/>
        <end position="106"/>
    </location>
</feature>
<feature type="coiled-coil region" evidence="5">
    <location>
        <begin position="15"/>
        <end position="37"/>
    </location>
</feature>
<feature type="compositionally biased region" description="Basic and acidic residues" evidence="6">
    <location>
        <begin position="84"/>
        <end position="96"/>
    </location>
</feature>
<feature type="binding site" evidence="5">
    <location>
        <begin position="167"/>
        <end position="174"/>
    </location>
    <ligand>
        <name>ATP</name>
        <dbReference type="ChEBI" id="CHEBI:30616"/>
    </ligand>
</feature>
<feature type="modified residue" description="N6-acetyllysine" evidence="4">
    <location>
        <position position="8"/>
    </location>
</feature>
<feature type="modified residue" description="Phosphoserine" evidence="9">
    <location>
        <position position="95"/>
    </location>
</feature>
<feature type="modified residue" description="Phosphoserine" evidence="9">
    <location>
        <position position="97"/>
    </location>
</feature>
<evidence type="ECO:0000250" key="1"/>
<evidence type="ECO:0000250" key="2">
    <source>
        <dbReference type="UniProtKB" id="O75351"/>
    </source>
</evidence>
<evidence type="ECO:0000250" key="3">
    <source>
        <dbReference type="UniProtKB" id="Q8VEJ9"/>
    </source>
</evidence>
<evidence type="ECO:0000250" key="4">
    <source>
        <dbReference type="UniProtKB" id="Q9UN37"/>
    </source>
</evidence>
<evidence type="ECO:0000255" key="5"/>
<evidence type="ECO:0000256" key="6">
    <source>
        <dbReference type="SAM" id="MobiDB-lite"/>
    </source>
</evidence>
<evidence type="ECO:0000305" key="7"/>
<evidence type="ECO:0000312" key="8">
    <source>
        <dbReference type="RGD" id="628810"/>
    </source>
</evidence>
<evidence type="ECO:0007744" key="9">
    <source>
    </source>
</evidence>
<accession>Q793F9</accession>
<sequence length="437" mass="48907">MTTSTLQKAIDLVTKATEEDKAKNYEEALRLYQHAVEYFLHAIKYEAHSDKAKESIRAKCMQYLDRAEKLKDYLRNKEKHGKKPVKENQSEGKGSDSDSEGDNPEKKKLQEQLMGAVVMEKPNIRWNDVAGLEGAKEALKEAVILPIKFPHLFTGKRTPWRGILLFGPPGTGKSYLAKAVATEANNSTFFSVSSSDLMSKWLGESEKLVKNLFELARQHKPSIIFIDEVDSLCGSRNENESEAARRIKTEFLVQMQGVGNNNDGTLVLGATNIPWVLDSAIRRRFEKRIYIPLPEEAARAQMFRLHLGSTPHNLTDANIHELARKTEGYSGADISIIVRDSLMQPVRKVQSATHFKKVCGPSRTNPSVMIDDLLTPCSPGDPGAIEMTWMDVPGDKLLEPVVCMSDMLRSLATTRPTVNADDLLKVKKFSEDFGQES</sequence>
<dbReference type="EC" id="3.6.4.6" evidence="2"/>
<dbReference type="EMBL" id="AB076398">
    <property type="protein sequence ID" value="BAC00961.1"/>
    <property type="molecule type" value="mRNA"/>
</dbReference>
<dbReference type="RefSeq" id="NP_663711.1">
    <property type="nucleotide sequence ID" value="NM_145678.2"/>
</dbReference>
<dbReference type="BMRB" id="Q793F9"/>
<dbReference type="SMR" id="Q793F9"/>
<dbReference type="BioGRID" id="251621">
    <property type="interactions" value="1"/>
</dbReference>
<dbReference type="FunCoup" id="Q793F9">
    <property type="interactions" value="3418"/>
</dbReference>
<dbReference type="IntAct" id="Q793F9">
    <property type="interactions" value="1"/>
</dbReference>
<dbReference type="MINT" id="Q793F9"/>
<dbReference type="STRING" id="10116.ENSRNOP00000046690"/>
<dbReference type="iPTMnet" id="Q793F9"/>
<dbReference type="PhosphoSitePlus" id="Q793F9"/>
<dbReference type="jPOST" id="Q793F9"/>
<dbReference type="PaxDb" id="10116-ENSRNOP00000046690"/>
<dbReference type="GeneID" id="246772"/>
<dbReference type="KEGG" id="rno:246772"/>
<dbReference type="UCSC" id="RGD:628810">
    <property type="organism name" value="rat"/>
</dbReference>
<dbReference type="AGR" id="RGD:628810"/>
<dbReference type="CTD" id="27183"/>
<dbReference type="RGD" id="628810">
    <property type="gene designation" value="Vps4a"/>
</dbReference>
<dbReference type="eggNOG" id="KOG0739">
    <property type="taxonomic scope" value="Eukaryota"/>
</dbReference>
<dbReference type="InParanoid" id="Q793F9"/>
<dbReference type="Reactome" id="R-RNO-917729">
    <property type="pathway name" value="Endosomal Sorting Complex Required For Transport (ESCRT)"/>
</dbReference>
<dbReference type="Reactome" id="R-RNO-9668328">
    <property type="pathway name" value="Sealing of the nuclear envelope (NE) by ESCRT-III"/>
</dbReference>
<dbReference type="PRO" id="PR:Q793F9"/>
<dbReference type="Proteomes" id="UP000002494">
    <property type="component" value="Unplaced"/>
</dbReference>
<dbReference type="GO" id="GO:0005813">
    <property type="term" value="C:centrosome"/>
    <property type="evidence" value="ECO:0000266"/>
    <property type="project" value="RGD"/>
</dbReference>
<dbReference type="GO" id="GO:0005737">
    <property type="term" value="C:cytoplasm"/>
    <property type="evidence" value="ECO:0000266"/>
    <property type="project" value="RGD"/>
</dbReference>
<dbReference type="GO" id="GO:0005829">
    <property type="term" value="C:cytosol"/>
    <property type="evidence" value="ECO:0000266"/>
    <property type="project" value="RGD"/>
</dbReference>
<dbReference type="GO" id="GO:0005769">
    <property type="term" value="C:early endosome"/>
    <property type="evidence" value="ECO:0000314"/>
    <property type="project" value="RGD"/>
</dbReference>
<dbReference type="GO" id="GO:0005768">
    <property type="term" value="C:endosome"/>
    <property type="evidence" value="ECO:0000266"/>
    <property type="project" value="RGD"/>
</dbReference>
<dbReference type="GO" id="GO:0010008">
    <property type="term" value="C:endosome membrane"/>
    <property type="evidence" value="ECO:0000266"/>
    <property type="project" value="RGD"/>
</dbReference>
<dbReference type="GO" id="GO:0090543">
    <property type="term" value="C:Flemming body"/>
    <property type="evidence" value="ECO:0000266"/>
    <property type="project" value="RGD"/>
</dbReference>
<dbReference type="GO" id="GO:0005770">
    <property type="term" value="C:late endosome"/>
    <property type="evidence" value="ECO:0000266"/>
    <property type="project" value="RGD"/>
</dbReference>
<dbReference type="GO" id="GO:0031902">
    <property type="term" value="C:late endosome membrane"/>
    <property type="evidence" value="ECO:0007669"/>
    <property type="project" value="UniProtKB-SubCell"/>
</dbReference>
<dbReference type="GO" id="GO:0005764">
    <property type="term" value="C:lysosome"/>
    <property type="evidence" value="ECO:0000266"/>
    <property type="project" value="RGD"/>
</dbReference>
<dbReference type="GO" id="GO:0030496">
    <property type="term" value="C:midbody"/>
    <property type="evidence" value="ECO:0000250"/>
    <property type="project" value="UniProtKB"/>
</dbReference>
<dbReference type="GO" id="GO:0005634">
    <property type="term" value="C:nucleus"/>
    <property type="evidence" value="ECO:0000266"/>
    <property type="project" value="RGD"/>
</dbReference>
<dbReference type="GO" id="GO:0048471">
    <property type="term" value="C:perinuclear region of cytoplasm"/>
    <property type="evidence" value="ECO:0000266"/>
    <property type="project" value="RGD"/>
</dbReference>
<dbReference type="GO" id="GO:0005886">
    <property type="term" value="C:plasma membrane"/>
    <property type="evidence" value="ECO:0000266"/>
    <property type="project" value="RGD"/>
</dbReference>
<dbReference type="GO" id="GO:0000922">
    <property type="term" value="C:spindle pole"/>
    <property type="evidence" value="ECO:0000266"/>
    <property type="project" value="RGD"/>
</dbReference>
<dbReference type="GO" id="GO:0005774">
    <property type="term" value="C:vacuolar membrane"/>
    <property type="evidence" value="ECO:0000266"/>
    <property type="project" value="RGD"/>
</dbReference>
<dbReference type="GO" id="GO:0005524">
    <property type="term" value="F:ATP binding"/>
    <property type="evidence" value="ECO:0000266"/>
    <property type="project" value="RGD"/>
</dbReference>
<dbReference type="GO" id="GO:0016887">
    <property type="term" value="F:ATP hydrolysis activity"/>
    <property type="evidence" value="ECO:0000266"/>
    <property type="project" value="RGD"/>
</dbReference>
<dbReference type="GO" id="GO:0044877">
    <property type="term" value="F:protein-containing complex binding"/>
    <property type="evidence" value="ECO:0000266"/>
    <property type="project" value="RGD"/>
</dbReference>
<dbReference type="GO" id="GO:0031267">
    <property type="term" value="F:small GTPase binding"/>
    <property type="evidence" value="ECO:0000353"/>
    <property type="project" value="RGD"/>
</dbReference>
<dbReference type="GO" id="GO:0051301">
    <property type="term" value="P:cell division"/>
    <property type="evidence" value="ECO:0000266"/>
    <property type="project" value="RGD"/>
</dbReference>
<dbReference type="GO" id="GO:0016197">
    <property type="term" value="P:endosomal transport"/>
    <property type="evidence" value="ECO:0000266"/>
    <property type="project" value="RGD"/>
</dbReference>
<dbReference type="GO" id="GO:0034058">
    <property type="term" value="P:endosomal vesicle fusion"/>
    <property type="evidence" value="ECO:0000266"/>
    <property type="project" value="RGD"/>
</dbReference>
<dbReference type="GO" id="GO:0007032">
    <property type="term" value="P:endosome organization"/>
    <property type="evidence" value="ECO:0000266"/>
    <property type="project" value="RGD"/>
</dbReference>
<dbReference type="GO" id="GO:0032367">
    <property type="term" value="P:intracellular cholesterol transport"/>
    <property type="evidence" value="ECO:0000266"/>
    <property type="project" value="RGD"/>
</dbReference>
<dbReference type="GO" id="GO:0061738">
    <property type="term" value="P:late endosomal microautophagy"/>
    <property type="evidence" value="ECO:0000266"/>
    <property type="project" value="RGD"/>
</dbReference>
<dbReference type="GO" id="GO:0061952">
    <property type="term" value="P:midbody abscission"/>
    <property type="evidence" value="ECO:0000250"/>
    <property type="project" value="UniProtKB"/>
</dbReference>
<dbReference type="GO" id="GO:0044878">
    <property type="term" value="P:mitotic cytokinesis checkpoint signaling"/>
    <property type="evidence" value="ECO:0000250"/>
    <property type="project" value="UniProtKB"/>
</dbReference>
<dbReference type="GO" id="GO:0007080">
    <property type="term" value="P:mitotic metaphase chromosome alignment"/>
    <property type="evidence" value="ECO:0000266"/>
    <property type="project" value="RGD"/>
</dbReference>
<dbReference type="GO" id="GO:0036258">
    <property type="term" value="P:multivesicular body assembly"/>
    <property type="evidence" value="ECO:0000266"/>
    <property type="project" value="RGD"/>
</dbReference>
<dbReference type="GO" id="GO:0032466">
    <property type="term" value="P:negative regulation of cytokinesis"/>
    <property type="evidence" value="ECO:0000250"/>
    <property type="project" value="UniProtKB"/>
</dbReference>
<dbReference type="GO" id="GO:0006997">
    <property type="term" value="P:nucleus organization"/>
    <property type="evidence" value="ECO:0000266"/>
    <property type="project" value="RGD"/>
</dbReference>
<dbReference type="GO" id="GO:1903543">
    <property type="term" value="P:positive regulation of exosomal secretion"/>
    <property type="evidence" value="ECO:0000266"/>
    <property type="project" value="RGD"/>
</dbReference>
<dbReference type="GO" id="GO:1903774">
    <property type="term" value="P:positive regulation of viral budding via host ESCRT complex"/>
    <property type="evidence" value="ECO:0000266"/>
    <property type="project" value="RGD"/>
</dbReference>
<dbReference type="GO" id="GO:0006622">
    <property type="term" value="P:protein targeting to lysosome"/>
    <property type="evidence" value="ECO:0000266"/>
    <property type="project" value="RGD"/>
</dbReference>
<dbReference type="GO" id="GO:0032880">
    <property type="term" value="P:regulation of protein localization"/>
    <property type="evidence" value="ECO:0000266"/>
    <property type="project" value="RGD"/>
</dbReference>
<dbReference type="GO" id="GO:1903076">
    <property type="term" value="P:regulation of protein localization to plasma membrane"/>
    <property type="evidence" value="ECO:0000266"/>
    <property type="project" value="RGD"/>
</dbReference>
<dbReference type="GO" id="GO:0043162">
    <property type="term" value="P:ubiquitin-dependent protein catabolic process via the multivesicular body sorting pathway"/>
    <property type="evidence" value="ECO:0000266"/>
    <property type="project" value="RGD"/>
</dbReference>
<dbReference type="GO" id="GO:0090611">
    <property type="term" value="P:ubiquitin-independent protein catabolic process via the multivesicular body sorting pathway"/>
    <property type="evidence" value="ECO:0000266"/>
    <property type="project" value="RGD"/>
</dbReference>
<dbReference type="GO" id="GO:0007033">
    <property type="term" value="P:vacuole organization"/>
    <property type="evidence" value="ECO:0000318"/>
    <property type="project" value="GO_Central"/>
</dbReference>
<dbReference type="GO" id="GO:0006900">
    <property type="term" value="P:vesicle budding from membrane"/>
    <property type="evidence" value="ECO:0000266"/>
    <property type="project" value="RGD"/>
</dbReference>
<dbReference type="GO" id="GO:0072319">
    <property type="term" value="P:vesicle uncoating"/>
    <property type="evidence" value="ECO:0000266"/>
    <property type="project" value="RGD"/>
</dbReference>
<dbReference type="GO" id="GO:0016192">
    <property type="term" value="P:vesicle-mediated transport"/>
    <property type="evidence" value="ECO:0000266"/>
    <property type="project" value="RGD"/>
</dbReference>
<dbReference type="GO" id="GO:0046761">
    <property type="term" value="P:viral budding from plasma membrane"/>
    <property type="evidence" value="ECO:0000266"/>
    <property type="project" value="RGD"/>
</dbReference>
<dbReference type="GO" id="GO:0039702">
    <property type="term" value="P:viral budding via host ESCRT complex"/>
    <property type="evidence" value="ECO:0000266"/>
    <property type="project" value="RGD"/>
</dbReference>
<dbReference type="CDD" id="cd02678">
    <property type="entry name" value="MIT_VPS4"/>
    <property type="match status" value="1"/>
</dbReference>
<dbReference type="CDD" id="cd19521">
    <property type="entry name" value="RecA-like_VPS4"/>
    <property type="match status" value="1"/>
</dbReference>
<dbReference type="FunFam" id="3.40.50.300:FF:000043">
    <property type="entry name" value="Vacuolar protein sorting-associated protein 4"/>
    <property type="match status" value="1"/>
</dbReference>
<dbReference type="FunFam" id="1.20.58.80:FF:000002">
    <property type="entry name" value="Vacuolar protein sorting-associated protein 4A"/>
    <property type="match status" value="1"/>
</dbReference>
<dbReference type="FunFam" id="1.10.8.60:FF:000015">
    <property type="entry name" value="vacuolar protein sorting-associated protein 4A"/>
    <property type="match status" value="1"/>
</dbReference>
<dbReference type="Gene3D" id="1.10.8.60">
    <property type="match status" value="1"/>
</dbReference>
<dbReference type="Gene3D" id="3.40.50.300">
    <property type="entry name" value="P-loop containing nucleotide triphosphate hydrolases"/>
    <property type="match status" value="1"/>
</dbReference>
<dbReference type="Gene3D" id="1.20.58.80">
    <property type="entry name" value="Phosphotransferase system, lactose/cellobiose-type IIA subunit"/>
    <property type="match status" value="1"/>
</dbReference>
<dbReference type="InterPro" id="IPR003593">
    <property type="entry name" value="AAA+_ATPase"/>
</dbReference>
<dbReference type="InterPro" id="IPR041569">
    <property type="entry name" value="AAA_lid_3"/>
</dbReference>
<dbReference type="InterPro" id="IPR003959">
    <property type="entry name" value="ATPase_AAA_core"/>
</dbReference>
<dbReference type="InterPro" id="IPR003960">
    <property type="entry name" value="ATPase_AAA_CS"/>
</dbReference>
<dbReference type="InterPro" id="IPR007330">
    <property type="entry name" value="MIT_dom"/>
</dbReference>
<dbReference type="InterPro" id="IPR036181">
    <property type="entry name" value="MIT_dom_sf"/>
</dbReference>
<dbReference type="InterPro" id="IPR050304">
    <property type="entry name" value="MT-severing_AAA_ATPase"/>
</dbReference>
<dbReference type="InterPro" id="IPR027417">
    <property type="entry name" value="P-loop_NTPase"/>
</dbReference>
<dbReference type="InterPro" id="IPR015415">
    <property type="entry name" value="Spast_Vps4_C"/>
</dbReference>
<dbReference type="InterPro" id="IPR045253">
    <property type="entry name" value="VPS4_MIT"/>
</dbReference>
<dbReference type="PANTHER" id="PTHR23074">
    <property type="entry name" value="AAA DOMAIN-CONTAINING"/>
    <property type="match status" value="1"/>
</dbReference>
<dbReference type="PANTHER" id="PTHR23074:SF83">
    <property type="entry name" value="VACUOLAR PROTEIN SORTING-ASSOCIATED PROTEIN 4A"/>
    <property type="match status" value="1"/>
</dbReference>
<dbReference type="Pfam" id="PF00004">
    <property type="entry name" value="AAA"/>
    <property type="match status" value="1"/>
</dbReference>
<dbReference type="Pfam" id="PF17862">
    <property type="entry name" value="AAA_lid_3"/>
    <property type="match status" value="1"/>
</dbReference>
<dbReference type="Pfam" id="PF04212">
    <property type="entry name" value="MIT"/>
    <property type="match status" value="1"/>
</dbReference>
<dbReference type="Pfam" id="PF09336">
    <property type="entry name" value="Vps4_C"/>
    <property type="match status" value="1"/>
</dbReference>
<dbReference type="SMART" id="SM00382">
    <property type="entry name" value="AAA"/>
    <property type="match status" value="1"/>
</dbReference>
<dbReference type="SMART" id="SM00745">
    <property type="entry name" value="MIT"/>
    <property type="match status" value="1"/>
</dbReference>
<dbReference type="SUPFAM" id="SSF116846">
    <property type="entry name" value="MIT domain"/>
    <property type="match status" value="1"/>
</dbReference>
<dbReference type="SUPFAM" id="SSF52540">
    <property type="entry name" value="P-loop containing nucleoside triphosphate hydrolases"/>
    <property type="match status" value="1"/>
</dbReference>
<dbReference type="PROSITE" id="PS00674">
    <property type="entry name" value="AAA"/>
    <property type="match status" value="1"/>
</dbReference>
<keyword id="KW-0007">Acetylation</keyword>
<keyword id="KW-0067">ATP-binding</keyword>
<keyword id="KW-0131">Cell cycle</keyword>
<keyword id="KW-0132">Cell division</keyword>
<keyword id="KW-0175">Coiled coil</keyword>
<keyword id="KW-0963">Cytoplasm</keyword>
<keyword id="KW-0206">Cytoskeleton</keyword>
<keyword id="KW-0967">Endosome</keyword>
<keyword id="KW-0378">Hydrolase</keyword>
<keyword id="KW-0472">Membrane</keyword>
<keyword id="KW-0547">Nucleotide-binding</keyword>
<keyword id="KW-0597">Phosphoprotein</keyword>
<keyword id="KW-0653">Protein transport</keyword>
<keyword id="KW-1185">Reference proteome</keyword>
<keyword id="KW-0813">Transport</keyword>